<gene>
    <name type="primary">NRM</name>
</gene>
<feature type="chain" id="PRO_0000299398" description="Nurim">
    <location>
        <begin position="1"/>
        <end position="262"/>
    </location>
</feature>
<feature type="topological domain" description="Nuclear" evidence="2">
    <location>
        <begin position="1"/>
        <end position="4"/>
    </location>
</feature>
<feature type="transmembrane region" description="Helical" evidence="2">
    <location>
        <begin position="5"/>
        <end position="28"/>
    </location>
</feature>
<feature type="topological domain" description="Perinuclear space" evidence="2">
    <location>
        <begin position="29"/>
        <end position="58"/>
    </location>
</feature>
<feature type="transmembrane region" description="Helical" evidence="2">
    <location>
        <begin position="59"/>
        <end position="80"/>
    </location>
</feature>
<feature type="topological domain" description="Nuclear" evidence="2">
    <location>
        <begin position="81"/>
        <end position="97"/>
    </location>
</feature>
<feature type="transmembrane region" description="Helical" evidence="2">
    <location>
        <begin position="98"/>
        <end position="114"/>
    </location>
</feature>
<feature type="topological domain" description="Perinuclear space" evidence="2">
    <location>
        <begin position="115"/>
        <end position="133"/>
    </location>
</feature>
<feature type="transmembrane region" description="Helical" evidence="2">
    <location>
        <begin position="134"/>
        <end position="164"/>
    </location>
</feature>
<feature type="topological domain" description="Nuclear" evidence="2">
    <location>
        <begin position="165"/>
        <end position="191"/>
    </location>
</feature>
<feature type="transmembrane region" description="Helical" evidence="2">
    <location>
        <begin position="192"/>
        <end position="210"/>
    </location>
</feature>
<feature type="topological domain" description="Perinuclear space" evidence="2">
    <location>
        <begin position="211"/>
        <end position="216"/>
    </location>
</feature>
<feature type="transmembrane region" description="Helical" evidence="2">
    <location>
        <begin position="217"/>
        <end position="234"/>
    </location>
</feature>
<feature type="topological domain" description="Nuclear" evidence="2">
    <location>
        <begin position="235"/>
        <end position="262"/>
    </location>
</feature>
<comment type="subcellular location">
    <subcellularLocation>
        <location evidence="1">Nucleus inner membrane</location>
        <topology evidence="1">Multi-pass membrane protein</topology>
    </subcellularLocation>
</comment>
<comment type="similarity">
    <text evidence="3">Belongs to the nurim family.</text>
</comment>
<organism>
    <name type="scientific">Pan troglodytes</name>
    <name type="common">Chimpanzee</name>
    <dbReference type="NCBI Taxonomy" id="9598"/>
    <lineage>
        <taxon>Eukaryota</taxon>
        <taxon>Metazoa</taxon>
        <taxon>Chordata</taxon>
        <taxon>Craniata</taxon>
        <taxon>Vertebrata</taxon>
        <taxon>Euteleostomi</taxon>
        <taxon>Mammalia</taxon>
        <taxon>Eutheria</taxon>
        <taxon>Euarchontoglires</taxon>
        <taxon>Primates</taxon>
        <taxon>Haplorrhini</taxon>
        <taxon>Catarrhini</taxon>
        <taxon>Hominidae</taxon>
        <taxon>Pan</taxon>
    </lineage>
</organism>
<dbReference type="EMBL" id="AB210177">
    <property type="protein sequence ID" value="BAE92791.1"/>
    <property type="molecule type" value="Genomic_DNA"/>
</dbReference>
<dbReference type="EMBL" id="AB210178">
    <property type="protein sequence ID" value="BAE92792.1"/>
    <property type="molecule type" value="Genomic_DNA"/>
</dbReference>
<dbReference type="RefSeq" id="NP_001035205.1">
    <property type="nucleotide sequence ID" value="NM_001040116.1"/>
</dbReference>
<dbReference type="FunCoup" id="Q1XHX8">
    <property type="interactions" value="411"/>
</dbReference>
<dbReference type="STRING" id="9598.ENSPTRP00000066973"/>
<dbReference type="PaxDb" id="9598-ENSPTRP00000030602"/>
<dbReference type="Ensembl" id="ENSPTRT00000082276.1">
    <property type="protein sequence ID" value="ENSPTRP00000066973.1"/>
    <property type="gene ID" value="ENSPTRG00000017937.6"/>
</dbReference>
<dbReference type="GeneID" id="471957"/>
<dbReference type="KEGG" id="ptr:471957"/>
<dbReference type="CTD" id="11270"/>
<dbReference type="VGNC" id="VGNC:48899">
    <property type="gene designation" value="NRM"/>
</dbReference>
<dbReference type="eggNOG" id="ENOG502RS62">
    <property type="taxonomic scope" value="Eukaryota"/>
</dbReference>
<dbReference type="GeneTree" id="ENSGT00390000008146"/>
<dbReference type="HOGENOM" id="CLU_083708_1_0_1"/>
<dbReference type="InParanoid" id="Q1XHX8"/>
<dbReference type="OMA" id="WSIWFPL"/>
<dbReference type="OrthoDB" id="15855at9604"/>
<dbReference type="TreeFam" id="TF324853"/>
<dbReference type="Proteomes" id="UP000002277">
    <property type="component" value="Chromosome 6"/>
</dbReference>
<dbReference type="Bgee" id="ENSPTRG00000017937">
    <property type="expression patterns" value="Expressed in testis and 18 other cell types or tissues"/>
</dbReference>
<dbReference type="GO" id="GO:0005635">
    <property type="term" value="C:nuclear envelope"/>
    <property type="evidence" value="ECO:0000250"/>
    <property type="project" value="UniProtKB"/>
</dbReference>
<dbReference type="GO" id="GO:0005637">
    <property type="term" value="C:nuclear inner membrane"/>
    <property type="evidence" value="ECO:0007669"/>
    <property type="project" value="UniProtKB-SubCell"/>
</dbReference>
<dbReference type="GO" id="GO:0031965">
    <property type="term" value="C:nuclear membrane"/>
    <property type="evidence" value="ECO:0000318"/>
    <property type="project" value="GO_Central"/>
</dbReference>
<dbReference type="InterPro" id="IPR033580">
    <property type="entry name" value="Nurim-like"/>
</dbReference>
<dbReference type="PANTHER" id="PTHR31040">
    <property type="entry name" value="NURIM"/>
    <property type="match status" value="1"/>
</dbReference>
<dbReference type="PANTHER" id="PTHR31040:SF1">
    <property type="entry name" value="NURIM"/>
    <property type="match status" value="1"/>
</dbReference>
<keyword id="KW-0472">Membrane</keyword>
<keyword id="KW-0539">Nucleus</keyword>
<keyword id="KW-1185">Reference proteome</keyword>
<keyword id="KW-0812">Transmembrane</keyword>
<keyword id="KW-1133">Transmembrane helix</keyword>
<protein>
    <recommendedName>
        <fullName>Nurim</fullName>
    </recommendedName>
    <alternativeName>
        <fullName>Nuclear envelope membrane protein</fullName>
    </alternativeName>
    <alternativeName>
        <fullName>Nuclear rim protein</fullName>
    </alternativeName>
</protein>
<reference key="1">
    <citation type="journal article" date="2006" name="Genetics">
        <title>Rapid evolution of major histocompatibility complex class I genes in primates generates new disease alleles in humans via hitchhiking diversity.</title>
        <authorList>
            <person name="Shiina T."/>
            <person name="Ota M."/>
            <person name="Shimizu S."/>
            <person name="Katsuyama Y."/>
            <person name="Hashimoto N."/>
            <person name="Takasu M."/>
            <person name="Anzai T."/>
            <person name="Kulski J.K."/>
            <person name="Kikkawa E."/>
            <person name="Naruse T."/>
            <person name="Kimura N."/>
            <person name="Yanagiya K."/>
            <person name="Watanabe A."/>
            <person name="Hosomichi K."/>
            <person name="Kohara S."/>
            <person name="Iwamoto C."/>
            <person name="Umehara Y."/>
            <person name="Meyer A."/>
            <person name="Wanner V."/>
            <person name="Sano K."/>
            <person name="Macquin C."/>
            <person name="Ikeo K."/>
            <person name="Tokunaga K."/>
            <person name="Gojobori T."/>
            <person name="Inoko H."/>
            <person name="Bahram S."/>
        </authorList>
    </citation>
    <scope>NUCLEOTIDE SEQUENCE [LARGE SCALE GENOMIC DNA]</scope>
</reference>
<name>NRM_PANTR</name>
<evidence type="ECO:0000250" key="1"/>
<evidence type="ECO:0000255" key="2"/>
<evidence type="ECO:0000305" key="3"/>
<sequence>MAPALLLVPAALASFILAFGTGVEFVRFTSLRPLLGGIPESGGPDARQGWLAALQDRSILAPLAWDLGLLLLFVGQHSLMAAERVKAWTSRYFGVLQRSLYVACTALALQLVMRYWEPIPKGPVLWEARAEPWATWVPLLCFVLHVISWLLIFSILLVFDYAELMGLKQVYYHVLGLGEPLALKSPRALRLFSHLRHPVCVELLTVLWVVPTLGTDRLLLAFLLTLYLGLAHGLDQQDLRYLRAQLQRKLHLLSRPQDGEAE</sequence>
<proteinExistence type="inferred from homology"/>
<accession>Q1XHX8</accession>